<organism>
    <name type="scientific">Mesorhizobium japonicum (strain LMG 29417 / CECT 9101 / MAFF 303099)</name>
    <name type="common">Mesorhizobium loti (strain MAFF 303099)</name>
    <dbReference type="NCBI Taxonomy" id="266835"/>
    <lineage>
        <taxon>Bacteria</taxon>
        <taxon>Pseudomonadati</taxon>
        <taxon>Pseudomonadota</taxon>
        <taxon>Alphaproteobacteria</taxon>
        <taxon>Hyphomicrobiales</taxon>
        <taxon>Phyllobacteriaceae</taxon>
        <taxon>Mesorhizobium</taxon>
    </lineage>
</organism>
<accession>Q98M84</accession>
<sequence>MTYGLILALVFGYLLGSIPFGLLLTRAAGLGDVRKIGSGNIGATNVLRTGNKGLAAATLLLDALKGTAAVLIAGHFAPETAVWAGLGAFLGHLFPVWLGFKGGKGVATYLGVLIGLAWQVALIFAVIWLAMAFLFRYSSLAALTAAVIVPIALYFLSAPQIAVLFVVMSIIVFIKHRANISRLLAGTEGKIGAKG</sequence>
<evidence type="ECO:0000255" key="1">
    <source>
        <dbReference type="HAMAP-Rule" id="MF_01043"/>
    </source>
</evidence>
<gene>
    <name evidence="1" type="primary">plsY</name>
    <name type="ordered locus">mlr0688</name>
</gene>
<reference key="1">
    <citation type="journal article" date="2000" name="DNA Res.">
        <title>Complete genome structure of the nitrogen-fixing symbiotic bacterium Mesorhizobium loti.</title>
        <authorList>
            <person name="Kaneko T."/>
            <person name="Nakamura Y."/>
            <person name="Sato S."/>
            <person name="Asamizu E."/>
            <person name="Kato T."/>
            <person name="Sasamoto S."/>
            <person name="Watanabe A."/>
            <person name="Idesawa K."/>
            <person name="Ishikawa A."/>
            <person name="Kawashima K."/>
            <person name="Kimura T."/>
            <person name="Kishida Y."/>
            <person name="Kiyokawa C."/>
            <person name="Kohara M."/>
            <person name="Matsumoto M."/>
            <person name="Matsuno A."/>
            <person name="Mochizuki Y."/>
            <person name="Nakayama S."/>
            <person name="Nakazaki N."/>
            <person name="Shimpo S."/>
            <person name="Sugimoto M."/>
            <person name="Takeuchi C."/>
            <person name="Yamada M."/>
            <person name="Tabata S."/>
        </authorList>
    </citation>
    <scope>NUCLEOTIDE SEQUENCE [LARGE SCALE GENOMIC DNA]</scope>
    <source>
        <strain>LMG 29417 / CECT 9101 / MAFF 303099</strain>
    </source>
</reference>
<dbReference type="EC" id="2.3.1.275" evidence="1"/>
<dbReference type="EMBL" id="BA000012">
    <property type="protein sequence ID" value="BAB48229.1"/>
    <property type="molecule type" value="Genomic_DNA"/>
</dbReference>
<dbReference type="RefSeq" id="WP_010909584.1">
    <property type="nucleotide sequence ID" value="NC_002678.2"/>
</dbReference>
<dbReference type="SMR" id="Q98M84"/>
<dbReference type="KEGG" id="mlo:mlr0688"/>
<dbReference type="PATRIC" id="fig|266835.9.peg.552"/>
<dbReference type="eggNOG" id="COG0344">
    <property type="taxonomic scope" value="Bacteria"/>
</dbReference>
<dbReference type="HOGENOM" id="CLU_081254_1_0_5"/>
<dbReference type="UniPathway" id="UPA00085"/>
<dbReference type="Proteomes" id="UP000000552">
    <property type="component" value="Chromosome"/>
</dbReference>
<dbReference type="GO" id="GO:0005886">
    <property type="term" value="C:plasma membrane"/>
    <property type="evidence" value="ECO:0007669"/>
    <property type="project" value="UniProtKB-SubCell"/>
</dbReference>
<dbReference type="GO" id="GO:0043772">
    <property type="term" value="F:acyl-phosphate glycerol-3-phosphate acyltransferase activity"/>
    <property type="evidence" value="ECO:0007669"/>
    <property type="project" value="UniProtKB-UniRule"/>
</dbReference>
<dbReference type="GO" id="GO:0008654">
    <property type="term" value="P:phospholipid biosynthetic process"/>
    <property type="evidence" value="ECO:0007669"/>
    <property type="project" value="UniProtKB-UniRule"/>
</dbReference>
<dbReference type="HAMAP" id="MF_01043">
    <property type="entry name" value="PlsY"/>
    <property type="match status" value="1"/>
</dbReference>
<dbReference type="InterPro" id="IPR003811">
    <property type="entry name" value="G3P_acylTferase_PlsY"/>
</dbReference>
<dbReference type="NCBIfam" id="TIGR00023">
    <property type="entry name" value="glycerol-3-phosphate 1-O-acyltransferase PlsY"/>
    <property type="match status" value="1"/>
</dbReference>
<dbReference type="PANTHER" id="PTHR30309:SF0">
    <property type="entry name" value="GLYCEROL-3-PHOSPHATE ACYLTRANSFERASE-RELATED"/>
    <property type="match status" value="1"/>
</dbReference>
<dbReference type="PANTHER" id="PTHR30309">
    <property type="entry name" value="INNER MEMBRANE PROTEIN YGIH"/>
    <property type="match status" value="1"/>
</dbReference>
<dbReference type="Pfam" id="PF02660">
    <property type="entry name" value="G3P_acyltransf"/>
    <property type="match status" value="1"/>
</dbReference>
<dbReference type="SMART" id="SM01207">
    <property type="entry name" value="G3P_acyltransf"/>
    <property type="match status" value="1"/>
</dbReference>
<protein>
    <recommendedName>
        <fullName evidence="1">Glycerol-3-phosphate acyltransferase</fullName>
    </recommendedName>
    <alternativeName>
        <fullName evidence="1">Acyl-PO4 G3P acyltransferase</fullName>
    </alternativeName>
    <alternativeName>
        <fullName evidence="1">Acyl-phosphate--glycerol-3-phosphate acyltransferase</fullName>
    </alternativeName>
    <alternativeName>
        <fullName evidence="1">G3P acyltransferase</fullName>
        <shortName evidence="1">GPAT</shortName>
        <ecNumber evidence="1">2.3.1.275</ecNumber>
    </alternativeName>
    <alternativeName>
        <fullName evidence="1">Lysophosphatidic acid synthase</fullName>
        <shortName evidence="1">LPA synthase</shortName>
    </alternativeName>
</protein>
<keyword id="KW-0997">Cell inner membrane</keyword>
<keyword id="KW-1003">Cell membrane</keyword>
<keyword id="KW-0444">Lipid biosynthesis</keyword>
<keyword id="KW-0443">Lipid metabolism</keyword>
<keyword id="KW-0472">Membrane</keyword>
<keyword id="KW-0594">Phospholipid biosynthesis</keyword>
<keyword id="KW-1208">Phospholipid metabolism</keyword>
<keyword id="KW-0808">Transferase</keyword>
<keyword id="KW-0812">Transmembrane</keyword>
<keyword id="KW-1133">Transmembrane helix</keyword>
<proteinExistence type="inferred from homology"/>
<feature type="chain" id="PRO_0000188436" description="Glycerol-3-phosphate acyltransferase">
    <location>
        <begin position="1"/>
        <end position="195"/>
    </location>
</feature>
<feature type="transmembrane region" description="Helical" evidence="1">
    <location>
        <begin position="4"/>
        <end position="24"/>
    </location>
</feature>
<feature type="transmembrane region" description="Helical" evidence="1">
    <location>
        <begin position="53"/>
        <end position="73"/>
    </location>
</feature>
<feature type="transmembrane region" description="Helical" evidence="1">
    <location>
        <begin position="80"/>
        <end position="100"/>
    </location>
</feature>
<feature type="transmembrane region" description="Helical" evidence="1">
    <location>
        <begin position="110"/>
        <end position="130"/>
    </location>
</feature>
<feature type="transmembrane region" description="Helical" evidence="1">
    <location>
        <begin position="133"/>
        <end position="153"/>
    </location>
</feature>
<feature type="transmembrane region" description="Helical" evidence="1">
    <location>
        <begin position="154"/>
        <end position="174"/>
    </location>
</feature>
<name>PLSY_RHILO</name>
<comment type="function">
    <text evidence="1">Catalyzes the transfer of an acyl group from acyl-phosphate (acyl-PO(4)) to glycerol-3-phosphate (G3P) to form lysophosphatidic acid (LPA). This enzyme utilizes acyl-phosphate as fatty acyl donor, but not acyl-CoA or acyl-ACP.</text>
</comment>
<comment type="catalytic activity">
    <reaction evidence="1">
        <text>an acyl phosphate + sn-glycerol 3-phosphate = a 1-acyl-sn-glycero-3-phosphate + phosphate</text>
        <dbReference type="Rhea" id="RHEA:34075"/>
        <dbReference type="ChEBI" id="CHEBI:43474"/>
        <dbReference type="ChEBI" id="CHEBI:57597"/>
        <dbReference type="ChEBI" id="CHEBI:57970"/>
        <dbReference type="ChEBI" id="CHEBI:59918"/>
        <dbReference type="EC" id="2.3.1.275"/>
    </reaction>
</comment>
<comment type="pathway">
    <text evidence="1">Lipid metabolism; phospholipid metabolism.</text>
</comment>
<comment type="subunit">
    <text evidence="1">Probably interacts with PlsX.</text>
</comment>
<comment type="subcellular location">
    <subcellularLocation>
        <location evidence="1">Cell inner membrane</location>
        <topology evidence="1">Multi-pass membrane protein</topology>
    </subcellularLocation>
</comment>
<comment type="similarity">
    <text evidence="1">Belongs to the PlsY family.</text>
</comment>